<name>RS5_BURP1</name>
<gene>
    <name evidence="1" type="primary">rpsE</name>
    <name type="ordered locus">BURPS1710b_3759</name>
</gene>
<sequence length="172" mass="18150">MAKMQAKVQADERDDGLREKMISVNRVTKVVKGGRILGFAALTVVGDGDGRVGMGKGKAKEVPVAVQKAMEQARRNMFKVPLKNGTLQHEVHGKHGASTVLLAPAKDGTGVIAGGPMRAVFDVMGVQNVVAKSHGSTNPYNLVRATLDGLRKQSTPADIAAKRGKSVEEILG</sequence>
<dbReference type="EMBL" id="CP000124">
    <property type="protein sequence ID" value="ABA48633.1"/>
    <property type="molecule type" value="Genomic_DNA"/>
</dbReference>
<dbReference type="RefSeq" id="WP_004197945.1">
    <property type="nucleotide sequence ID" value="NC_007434.1"/>
</dbReference>
<dbReference type="SMR" id="Q3JMT0"/>
<dbReference type="EnsemblBacteria" id="ABA48633">
    <property type="protein sequence ID" value="ABA48633"/>
    <property type="gene ID" value="BURPS1710b_3759"/>
</dbReference>
<dbReference type="GeneID" id="93126536"/>
<dbReference type="KEGG" id="bpm:BURPS1710b_3759"/>
<dbReference type="HOGENOM" id="CLU_065898_2_2_4"/>
<dbReference type="Proteomes" id="UP000002700">
    <property type="component" value="Chromosome I"/>
</dbReference>
<dbReference type="GO" id="GO:0015935">
    <property type="term" value="C:small ribosomal subunit"/>
    <property type="evidence" value="ECO:0007669"/>
    <property type="project" value="InterPro"/>
</dbReference>
<dbReference type="GO" id="GO:0019843">
    <property type="term" value="F:rRNA binding"/>
    <property type="evidence" value="ECO:0007669"/>
    <property type="project" value="UniProtKB-UniRule"/>
</dbReference>
<dbReference type="GO" id="GO:0003735">
    <property type="term" value="F:structural constituent of ribosome"/>
    <property type="evidence" value="ECO:0007669"/>
    <property type="project" value="InterPro"/>
</dbReference>
<dbReference type="GO" id="GO:0006412">
    <property type="term" value="P:translation"/>
    <property type="evidence" value="ECO:0007669"/>
    <property type="project" value="UniProtKB-UniRule"/>
</dbReference>
<dbReference type="FunFam" id="3.30.160.20:FF:000001">
    <property type="entry name" value="30S ribosomal protein S5"/>
    <property type="match status" value="1"/>
</dbReference>
<dbReference type="FunFam" id="3.30.230.10:FF:000002">
    <property type="entry name" value="30S ribosomal protein S5"/>
    <property type="match status" value="1"/>
</dbReference>
<dbReference type="Gene3D" id="3.30.160.20">
    <property type="match status" value="1"/>
</dbReference>
<dbReference type="Gene3D" id="3.30.230.10">
    <property type="match status" value="1"/>
</dbReference>
<dbReference type="HAMAP" id="MF_01307_B">
    <property type="entry name" value="Ribosomal_uS5_B"/>
    <property type="match status" value="1"/>
</dbReference>
<dbReference type="InterPro" id="IPR020568">
    <property type="entry name" value="Ribosomal_Su5_D2-typ_SF"/>
</dbReference>
<dbReference type="InterPro" id="IPR000851">
    <property type="entry name" value="Ribosomal_uS5"/>
</dbReference>
<dbReference type="InterPro" id="IPR005712">
    <property type="entry name" value="Ribosomal_uS5_bac-type"/>
</dbReference>
<dbReference type="InterPro" id="IPR005324">
    <property type="entry name" value="Ribosomal_uS5_C"/>
</dbReference>
<dbReference type="InterPro" id="IPR013810">
    <property type="entry name" value="Ribosomal_uS5_N"/>
</dbReference>
<dbReference type="InterPro" id="IPR018192">
    <property type="entry name" value="Ribosomal_uS5_N_CS"/>
</dbReference>
<dbReference type="InterPro" id="IPR014721">
    <property type="entry name" value="Ribsml_uS5_D2-typ_fold_subgr"/>
</dbReference>
<dbReference type="NCBIfam" id="TIGR01021">
    <property type="entry name" value="rpsE_bact"/>
    <property type="match status" value="1"/>
</dbReference>
<dbReference type="PANTHER" id="PTHR48277">
    <property type="entry name" value="MITOCHONDRIAL RIBOSOMAL PROTEIN S5"/>
    <property type="match status" value="1"/>
</dbReference>
<dbReference type="PANTHER" id="PTHR48277:SF1">
    <property type="entry name" value="MITOCHONDRIAL RIBOSOMAL PROTEIN S5"/>
    <property type="match status" value="1"/>
</dbReference>
<dbReference type="Pfam" id="PF00333">
    <property type="entry name" value="Ribosomal_S5"/>
    <property type="match status" value="1"/>
</dbReference>
<dbReference type="Pfam" id="PF03719">
    <property type="entry name" value="Ribosomal_S5_C"/>
    <property type="match status" value="1"/>
</dbReference>
<dbReference type="SUPFAM" id="SSF54768">
    <property type="entry name" value="dsRNA-binding domain-like"/>
    <property type="match status" value="1"/>
</dbReference>
<dbReference type="SUPFAM" id="SSF54211">
    <property type="entry name" value="Ribosomal protein S5 domain 2-like"/>
    <property type="match status" value="1"/>
</dbReference>
<dbReference type="PROSITE" id="PS00585">
    <property type="entry name" value="RIBOSOMAL_S5"/>
    <property type="match status" value="1"/>
</dbReference>
<dbReference type="PROSITE" id="PS50881">
    <property type="entry name" value="S5_DSRBD"/>
    <property type="match status" value="1"/>
</dbReference>
<reference key="1">
    <citation type="journal article" date="2010" name="Genome Biol. Evol.">
        <title>Continuing evolution of Burkholderia mallei through genome reduction and large-scale rearrangements.</title>
        <authorList>
            <person name="Losada L."/>
            <person name="Ronning C.M."/>
            <person name="DeShazer D."/>
            <person name="Woods D."/>
            <person name="Fedorova N."/>
            <person name="Kim H.S."/>
            <person name="Shabalina S.A."/>
            <person name="Pearson T.R."/>
            <person name="Brinkac L."/>
            <person name="Tan P."/>
            <person name="Nandi T."/>
            <person name="Crabtree J."/>
            <person name="Badger J."/>
            <person name="Beckstrom-Sternberg S."/>
            <person name="Saqib M."/>
            <person name="Schutzer S.E."/>
            <person name="Keim P."/>
            <person name="Nierman W.C."/>
        </authorList>
    </citation>
    <scope>NUCLEOTIDE SEQUENCE [LARGE SCALE GENOMIC DNA]</scope>
    <source>
        <strain>1710b</strain>
    </source>
</reference>
<organism>
    <name type="scientific">Burkholderia pseudomallei (strain 1710b)</name>
    <dbReference type="NCBI Taxonomy" id="320372"/>
    <lineage>
        <taxon>Bacteria</taxon>
        <taxon>Pseudomonadati</taxon>
        <taxon>Pseudomonadota</taxon>
        <taxon>Betaproteobacteria</taxon>
        <taxon>Burkholderiales</taxon>
        <taxon>Burkholderiaceae</taxon>
        <taxon>Burkholderia</taxon>
        <taxon>pseudomallei group</taxon>
    </lineage>
</organism>
<protein>
    <recommendedName>
        <fullName evidence="1">Small ribosomal subunit protein uS5</fullName>
    </recommendedName>
    <alternativeName>
        <fullName evidence="2">30S ribosomal protein S5</fullName>
    </alternativeName>
</protein>
<comment type="function">
    <text evidence="1">With S4 and S12 plays an important role in translational accuracy.</text>
</comment>
<comment type="function">
    <text evidence="1">Located at the back of the 30S subunit body where it stabilizes the conformation of the head with respect to the body.</text>
</comment>
<comment type="subunit">
    <text evidence="1">Part of the 30S ribosomal subunit. Contacts proteins S4 and S8.</text>
</comment>
<comment type="domain">
    <text>The N-terminal domain interacts with the head of the 30S subunit; the C-terminal domain interacts with the body and contacts protein S4. The interaction surface between S4 and S5 is involved in control of translational fidelity.</text>
</comment>
<comment type="similarity">
    <text evidence="1">Belongs to the universal ribosomal protein uS5 family.</text>
</comment>
<proteinExistence type="inferred from homology"/>
<accession>Q3JMT0</accession>
<evidence type="ECO:0000255" key="1">
    <source>
        <dbReference type="HAMAP-Rule" id="MF_01307"/>
    </source>
</evidence>
<evidence type="ECO:0000305" key="2"/>
<feature type="chain" id="PRO_0000230335" description="Small ribosomal subunit protein uS5">
    <location>
        <begin position="1"/>
        <end position="172"/>
    </location>
</feature>
<feature type="domain" description="S5 DRBM" evidence="1">
    <location>
        <begin position="17"/>
        <end position="80"/>
    </location>
</feature>
<keyword id="KW-0687">Ribonucleoprotein</keyword>
<keyword id="KW-0689">Ribosomal protein</keyword>
<keyword id="KW-0694">RNA-binding</keyword>
<keyword id="KW-0699">rRNA-binding</keyword>